<reference key="1">
    <citation type="journal article" date="2004" name="Proc. Natl. Acad. Sci. U.S.A.">
        <title>The diploid genome sequence of Candida albicans.</title>
        <authorList>
            <person name="Jones T."/>
            <person name="Federspiel N.A."/>
            <person name="Chibana H."/>
            <person name="Dungan J."/>
            <person name="Kalman S."/>
            <person name="Magee B.B."/>
            <person name="Newport G."/>
            <person name="Thorstenson Y.R."/>
            <person name="Agabian N."/>
            <person name="Magee P.T."/>
            <person name="Davis R.W."/>
            <person name="Scherer S."/>
        </authorList>
    </citation>
    <scope>NUCLEOTIDE SEQUENCE [LARGE SCALE GENOMIC DNA]</scope>
    <source>
        <strain>SC5314 / ATCC MYA-2876</strain>
    </source>
</reference>
<reference key="2">
    <citation type="journal article" date="2007" name="Genome Biol.">
        <title>Assembly of the Candida albicans genome into sixteen supercontigs aligned on the eight chromosomes.</title>
        <authorList>
            <person name="van het Hoog M."/>
            <person name="Rast T.J."/>
            <person name="Martchenko M."/>
            <person name="Grindle S."/>
            <person name="Dignard D."/>
            <person name="Hogues H."/>
            <person name="Cuomo C."/>
            <person name="Berriman M."/>
            <person name="Scherer S."/>
            <person name="Magee B.B."/>
            <person name="Whiteway M."/>
            <person name="Chibana H."/>
            <person name="Nantel A."/>
            <person name="Magee P.T."/>
        </authorList>
    </citation>
    <scope>GENOME REANNOTATION</scope>
    <source>
        <strain>SC5314 / ATCC MYA-2876</strain>
    </source>
</reference>
<reference key="3">
    <citation type="journal article" date="2013" name="Genome Biol.">
        <title>Assembly of a phased diploid Candida albicans genome facilitates allele-specific measurements and provides a simple model for repeat and indel structure.</title>
        <authorList>
            <person name="Muzzey D."/>
            <person name="Schwartz K."/>
            <person name="Weissman J.S."/>
            <person name="Sherlock G."/>
        </authorList>
    </citation>
    <scope>NUCLEOTIDE SEQUENCE [LARGE SCALE GENOMIC DNA]</scope>
    <scope>GENOME REANNOTATION</scope>
    <source>
        <strain>SC5314 / ATCC MYA-2876</strain>
    </source>
</reference>
<reference key="4">
    <citation type="journal article" date="2002" name="Eukaryot. Cell">
        <title>A forkhead transcription factor is important for true hyphal as well as yeast morphogenesis in Candida albicans.</title>
        <authorList>
            <person name="Bensen E.S."/>
            <person name="Filler S.G."/>
            <person name="Berman J."/>
        </authorList>
    </citation>
    <scope>IDENTIFICATION</scope>
</reference>
<reference key="5">
    <citation type="journal article" date="2010" name="PLoS Biol.">
        <title>Evolutionary tinkering with conserved components of a transcriptional regulatory network.</title>
        <authorList>
            <person name="Lavoie H."/>
            <person name="Hogues H."/>
            <person name="Mallick J."/>
            <person name="Sellam A."/>
            <person name="Nantel A."/>
            <person name="Whiteway M."/>
        </authorList>
    </citation>
    <scope>FUNCTION</scope>
</reference>
<reference key="6">
    <citation type="journal article" date="2013" name="J. Biol. Chem.">
        <title>The evolutionary rewiring of the ribosomal protein transcription pathway modifies the interaction of transcription factor heteromer Ifh1-Fhl1 (interacts with forkhead 1-forkhead-like 1) with the DNA-binding specificity element.</title>
        <authorList>
            <person name="Mallick J."/>
            <person name="Whiteway M."/>
        </authorList>
    </citation>
    <scope>FUNCTION</scope>
    <scope>INTERACTION WITH IFH1 AND TBF1</scope>
</reference>
<sequence>MSHIDGDDHMTKDLIDSLESKDNDLSLVTSNTQIPDVEVANLTHDADEINQLFDTATNNVLPESNKKDKPIDTQDLHEDDPKAVPKTTSNGESTSNSNSVSPKLLPNDGKSTPKIQKELRRKSTFVPVTSNSKSLEPSEDDNNNNNNNSRISAYARLDFENFTFFVQTLQVVLGRKSNDETLQQNVDVHLSSKKAISRRHAKIFYNFGTQRFEISILGRNGAFVDNVFVEKGLTIPLTDGNKIQIGDIPFKFVLPSNEPNEENNNQDSSEKQFNPSDAINLRSNLYSKSSSPQSSPKRKPQPSKKVKKEPVSASNTSKDIKPTPPVPTTAISPTASISTSTNAATAATATTPATTTAARKNSINRRNSLLKIRRLSNARRKSLAANDEINELLKDLGVTSIDEINEEDSELLDAQIQSLLDEDNENLGGIEDSLMKLAEFNESAIDDDDDDEEGNENSQADLDRLEKTMEHDAIDDEIKAIDSNLTLLDDEISKLTPLINDTNQGLLEEKETKKKQLEEEKRKKQLQQLQHKNSLAKFPRRSAPLMGKPASIQPPASSSIYSRINGLDKIGKTVSPRPPPPKLIAPVLRVTAEPSAIRSRPPLRAITVSDSSYIATFSYPKTIEEPSKYPKPKVKKEHHKKHSKKVYSLDEIPEPYRSKPNISFQIMITNVLKTEAARNGLIINEITEAIKEVYPYYKYCTDGWQFSINHCIKFTKIYKRLQKRGSEWLYAMDELYINERENIRIKQREIAKAKAKAEALRQEEIRQRQRLEAQKSLPHNIVGRNFASPYANTRVPPNQYNQFSQSSSSSSSSATTTTNGQYGSTTMVGGTSPQAGSIRAQLAAVRGNGNTPATTSTTPSLPAMNDPKTKKSLEYLQKELFTLYKARKLTYDTQTATSLITKAVATTIAQVNSIGAKAGAGDNALVFLVERAPEKVSKILDIALTKSIKEHEGIASKSPSQPATPGMRPEQLTTTSQSAATPTTTPQISNLQSLPVKPPISTPLPQVPQQQVSGVNIPGPIATPNIGVTSGVGNLGTTSIGTPTPTQIQSPATSVIPAMQSPQKPVSTPIPTSVPVPLPVPSAPLARPPSFGKPPGAGSSLSRPKAFGKPPGAGSSLSRPPTFLSNKPSYKRELEDDEEEGEQATNKIAKTE</sequence>
<proteinExistence type="evidence at protein level"/>
<evidence type="ECO:0000255" key="1"/>
<evidence type="ECO:0000255" key="2">
    <source>
        <dbReference type="PROSITE-ProRule" id="PRU00086"/>
    </source>
</evidence>
<evidence type="ECO:0000255" key="3">
    <source>
        <dbReference type="PROSITE-ProRule" id="PRU00089"/>
    </source>
</evidence>
<evidence type="ECO:0000256" key="4">
    <source>
        <dbReference type="SAM" id="MobiDB-lite"/>
    </source>
</evidence>
<evidence type="ECO:0000269" key="5">
    <source>
    </source>
</evidence>
<evidence type="ECO:0000269" key="6">
    <source>
    </source>
</evidence>
<evidence type="ECO:0000305" key="7"/>
<dbReference type="EMBL" id="CP017624">
    <property type="protein sequence ID" value="AOW27684.1"/>
    <property type="molecule type" value="Genomic_DNA"/>
</dbReference>
<dbReference type="RefSeq" id="XP_714827.2">
    <property type="nucleotide sequence ID" value="XM_709734.2"/>
</dbReference>
<dbReference type="SMR" id="Q59ZC8"/>
<dbReference type="BioGRID" id="1226587">
    <property type="interactions" value="2"/>
</dbReference>
<dbReference type="FunCoup" id="Q59ZC8">
    <property type="interactions" value="1189"/>
</dbReference>
<dbReference type="STRING" id="237561.Q59ZC8"/>
<dbReference type="EnsemblFungi" id="C2_06830C_A-T">
    <property type="protein sequence ID" value="C2_06830C_A-T-p1"/>
    <property type="gene ID" value="C2_06830C_A"/>
</dbReference>
<dbReference type="GeneID" id="3643493"/>
<dbReference type="KEGG" id="cal:CAALFM_C206830CA"/>
<dbReference type="CGD" id="CAL0000186899">
    <property type="gene designation" value="FHL1"/>
</dbReference>
<dbReference type="VEuPathDB" id="FungiDB:C2_06830C_A"/>
<dbReference type="eggNOG" id="KOG2294">
    <property type="taxonomic scope" value="Eukaryota"/>
</dbReference>
<dbReference type="HOGENOM" id="CLU_005476_0_0_1"/>
<dbReference type="InParanoid" id="Q59ZC8"/>
<dbReference type="OrthoDB" id="5954824at2759"/>
<dbReference type="PRO" id="PR:Q59ZC8"/>
<dbReference type="Proteomes" id="UP000000559">
    <property type="component" value="Chromosome 2"/>
</dbReference>
<dbReference type="GO" id="GO:0005634">
    <property type="term" value="C:nucleus"/>
    <property type="evidence" value="ECO:0007669"/>
    <property type="project" value="UniProtKB-SubCell"/>
</dbReference>
<dbReference type="GO" id="GO:0008796">
    <property type="term" value="F:bis(5'-nucleosyl)-tetraphosphatase activity"/>
    <property type="evidence" value="ECO:0000318"/>
    <property type="project" value="GO_Central"/>
</dbReference>
<dbReference type="GO" id="GO:0003700">
    <property type="term" value="F:DNA-binding transcription factor activity"/>
    <property type="evidence" value="ECO:0007669"/>
    <property type="project" value="InterPro"/>
</dbReference>
<dbReference type="GO" id="GO:0004780">
    <property type="term" value="F:sulfate adenylyltransferase (ADP) activity"/>
    <property type="evidence" value="ECO:0000318"/>
    <property type="project" value="GO_Central"/>
</dbReference>
<dbReference type="GO" id="GO:0000976">
    <property type="term" value="F:transcription cis-regulatory region binding"/>
    <property type="evidence" value="ECO:0000314"/>
    <property type="project" value="CGD"/>
</dbReference>
<dbReference type="GO" id="GO:0009164">
    <property type="term" value="P:nucleoside catabolic process"/>
    <property type="evidence" value="ECO:0000318"/>
    <property type="project" value="GO_Central"/>
</dbReference>
<dbReference type="GO" id="GO:0009165">
    <property type="term" value="P:nucleotide biosynthetic process"/>
    <property type="evidence" value="ECO:0000318"/>
    <property type="project" value="GO_Central"/>
</dbReference>
<dbReference type="GO" id="GO:0045944">
    <property type="term" value="P:positive regulation of transcription by RNA polymerase II"/>
    <property type="evidence" value="ECO:0000315"/>
    <property type="project" value="CGD"/>
</dbReference>
<dbReference type="GO" id="GO:0009303">
    <property type="term" value="P:rRNA transcription"/>
    <property type="evidence" value="ECO:0000315"/>
    <property type="project" value="CGD"/>
</dbReference>
<dbReference type="CDD" id="cd22701">
    <property type="entry name" value="FHA_FKH1-like"/>
    <property type="match status" value="1"/>
</dbReference>
<dbReference type="FunFam" id="2.60.200.20:FF:000039">
    <property type="entry name" value="Forkhead transcription factor Fkh1/2"/>
    <property type="match status" value="1"/>
</dbReference>
<dbReference type="Gene3D" id="2.60.200.20">
    <property type="match status" value="1"/>
</dbReference>
<dbReference type="Gene3D" id="1.10.10.10">
    <property type="entry name" value="Winged helix-like DNA-binding domain superfamily/Winged helix DNA-binding domain"/>
    <property type="match status" value="1"/>
</dbReference>
<dbReference type="InterPro" id="IPR000253">
    <property type="entry name" value="FHA_dom"/>
</dbReference>
<dbReference type="InterPro" id="IPR053364">
    <property type="entry name" value="Fork-head_TF_regulator"/>
</dbReference>
<dbReference type="InterPro" id="IPR001766">
    <property type="entry name" value="Fork_head_dom"/>
</dbReference>
<dbReference type="InterPro" id="IPR008984">
    <property type="entry name" value="SMAD_FHA_dom_sf"/>
</dbReference>
<dbReference type="InterPro" id="IPR036388">
    <property type="entry name" value="WH-like_DNA-bd_sf"/>
</dbReference>
<dbReference type="InterPro" id="IPR036390">
    <property type="entry name" value="WH_DNA-bd_sf"/>
</dbReference>
<dbReference type="PANTHER" id="PTHR42746">
    <property type="entry name" value="DIADENOSINE 5',5'''-P1,P4-TETRAPHOSPHATE PHOSPHORYLASE"/>
    <property type="match status" value="1"/>
</dbReference>
<dbReference type="PANTHER" id="PTHR42746:SF2">
    <property type="entry name" value="DIADENOSINE 5',5'''-P1,P4-TETRAPHOSPHATE PHOSPHORYLASE 2-RELATED"/>
    <property type="match status" value="1"/>
</dbReference>
<dbReference type="Pfam" id="PF00498">
    <property type="entry name" value="FHA"/>
    <property type="match status" value="1"/>
</dbReference>
<dbReference type="Pfam" id="PF00250">
    <property type="entry name" value="Forkhead"/>
    <property type="match status" value="1"/>
</dbReference>
<dbReference type="SMART" id="SM00339">
    <property type="entry name" value="FH"/>
    <property type="match status" value="1"/>
</dbReference>
<dbReference type="SMART" id="SM00240">
    <property type="entry name" value="FHA"/>
    <property type="match status" value="1"/>
</dbReference>
<dbReference type="SUPFAM" id="SSF49879">
    <property type="entry name" value="SMAD/FHA domain"/>
    <property type="match status" value="1"/>
</dbReference>
<dbReference type="SUPFAM" id="SSF46785">
    <property type="entry name" value="Winged helix' DNA-binding domain"/>
    <property type="match status" value="1"/>
</dbReference>
<dbReference type="PROSITE" id="PS50006">
    <property type="entry name" value="FHA_DOMAIN"/>
    <property type="match status" value="1"/>
</dbReference>
<dbReference type="PROSITE" id="PS50039">
    <property type="entry name" value="FORK_HEAD_3"/>
    <property type="match status" value="1"/>
</dbReference>
<organism>
    <name type="scientific">Candida albicans (strain SC5314 / ATCC MYA-2876)</name>
    <name type="common">Yeast</name>
    <dbReference type="NCBI Taxonomy" id="237561"/>
    <lineage>
        <taxon>Eukaryota</taxon>
        <taxon>Fungi</taxon>
        <taxon>Dikarya</taxon>
        <taxon>Ascomycota</taxon>
        <taxon>Saccharomycotina</taxon>
        <taxon>Pichiomycetes</taxon>
        <taxon>Debaryomycetaceae</taxon>
        <taxon>Candida/Lodderomyces clade</taxon>
        <taxon>Candida</taxon>
    </lineage>
</organism>
<accession>Q59ZC8</accession>
<accession>A0A1D8PHS0</accession>
<accession>Q59Z64</accession>
<feature type="chain" id="PRO_0000426079" description="Fork-head transcriptional regulator FHL1">
    <location>
        <begin position="1"/>
        <end position="1152"/>
    </location>
</feature>
<feature type="domain" description="FHA" evidence="2">
    <location>
        <begin position="171"/>
        <end position="229"/>
    </location>
</feature>
<feature type="DNA-binding region" description="Fork-head" evidence="3">
    <location>
        <begin position="659"/>
        <end position="756"/>
    </location>
</feature>
<feature type="region of interest" description="Disordered" evidence="4">
    <location>
        <begin position="55"/>
        <end position="147"/>
    </location>
</feature>
<feature type="region of interest" description="Disordered" evidence="4">
    <location>
        <begin position="254"/>
        <end position="362"/>
    </location>
</feature>
<feature type="region of interest" description="Disordered" evidence="4">
    <location>
        <begin position="514"/>
        <end position="557"/>
    </location>
</feature>
<feature type="region of interest" description="Disordered" evidence="4">
    <location>
        <begin position="787"/>
        <end position="833"/>
    </location>
</feature>
<feature type="region of interest" description="Disordered" evidence="4">
    <location>
        <begin position="846"/>
        <end position="867"/>
    </location>
</feature>
<feature type="region of interest" description="Disordered" evidence="4">
    <location>
        <begin position="951"/>
        <end position="1010"/>
    </location>
</feature>
<feature type="region of interest" description="Disordered" evidence="4">
    <location>
        <begin position="1057"/>
        <end position="1152"/>
    </location>
</feature>
<feature type="coiled-coil region" evidence="1">
    <location>
        <begin position="449"/>
        <end position="537"/>
    </location>
</feature>
<feature type="coiled-coil region" evidence="1">
    <location>
        <begin position="734"/>
        <end position="777"/>
    </location>
</feature>
<feature type="compositionally biased region" description="Basic and acidic residues" evidence="4">
    <location>
        <begin position="64"/>
        <end position="83"/>
    </location>
</feature>
<feature type="compositionally biased region" description="Low complexity" evidence="4">
    <location>
        <begin position="87"/>
        <end position="101"/>
    </location>
</feature>
<feature type="compositionally biased region" description="Polar residues" evidence="4">
    <location>
        <begin position="126"/>
        <end position="135"/>
    </location>
</feature>
<feature type="compositionally biased region" description="Polar residues" evidence="4">
    <location>
        <begin position="271"/>
        <end position="286"/>
    </location>
</feature>
<feature type="compositionally biased region" description="Basic residues" evidence="4">
    <location>
        <begin position="296"/>
        <end position="307"/>
    </location>
</feature>
<feature type="compositionally biased region" description="Low complexity" evidence="4">
    <location>
        <begin position="328"/>
        <end position="358"/>
    </location>
</feature>
<feature type="compositionally biased region" description="Low complexity" evidence="4">
    <location>
        <begin position="804"/>
        <end position="826"/>
    </location>
</feature>
<feature type="compositionally biased region" description="Low complexity" evidence="4">
    <location>
        <begin position="851"/>
        <end position="863"/>
    </location>
</feature>
<feature type="compositionally biased region" description="Low complexity" evidence="4">
    <location>
        <begin position="973"/>
        <end position="987"/>
    </location>
</feature>
<feature type="compositionally biased region" description="Pro residues" evidence="4">
    <location>
        <begin position="996"/>
        <end position="1006"/>
    </location>
</feature>
<feature type="compositionally biased region" description="Pro residues" evidence="4">
    <location>
        <begin position="1072"/>
        <end position="1082"/>
    </location>
</feature>
<feature type="compositionally biased region" description="Polar residues" evidence="4">
    <location>
        <begin position="1115"/>
        <end position="1128"/>
    </location>
</feature>
<feature type="compositionally biased region" description="Polar residues" evidence="4">
    <location>
        <begin position="1143"/>
        <end position="1152"/>
    </location>
</feature>
<keyword id="KW-0175">Coiled coil</keyword>
<keyword id="KW-0238">DNA-binding</keyword>
<keyword id="KW-0539">Nucleus</keyword>
<keyword id="KW-1185">Reference proteome</keyword>
<keyword id="KW-0804">Transcription</keyword>
<keyword id="KW-0805">Transcription regulation</keyword>
<comment type="function">
    <text evidence="5 6">In complex with IFH1, acts as a transcriptional regulator of rRNA and ribosomal protein genes (PubMed:20231876, PubMed:23625919). The FHL1-IFH1 complex is targeted to the ribosomal protein genes by the DNA-binding factor TBF1 (PubMed:23625919).</text>
</comment>
<comment type="subunit">
    <text evidence="6">Interacts with IFH1 and TBF1.</text>
</comment>
<comment type="subcellular location">
    <subcellularLocation>
        <location evidence="7">Nucleus</location>
    </subcellularLocation>
</comment>
<protein>
    <recommendedName>
        <fullName>Fork-head transcriptional regulator FHL1</fullName>
    </recommendedName>
</protein>
<gene>
    <name type="primary">FHL1</name>
    <name type="ordered locus">CAALFM_C206830CA</name>
    <name type="ORF">CaO19.2236</name>
    <name type="ORF">CaO19.9778</name>
</gene>
<name>FKHL1_CANAL</name>